<reference key="1">
    <citation type="journal article" date="1999" name="Science">
        <title>Genome sequence of the radioresistant bacterium Deinococcus radiodurans R1.</title>
        <authorList>
            <person name="White O."/>
            <person name="Eisen J.A."/>
            <person name="Heidelberg J.F."/>
            <person name="Hickey E.K."/>
            <person name="Peterson J.D."/>
            <person name="Dodson R.J."/>
            <person name="Haft D.H."/>
            <person name="Gwinn M.L."/>
            <person name="Nelson W.C."/>
            <person name="Richardson D.L."/>
            <person name="Moffat K.S."/>
            <person name="Qin H."/>
            <person name="Jiang L."/>
            <person name="Pamphile W."/>
            <person name="Crosby M."/>
            <person name="Shen M."/>
            <person name="Vamathevan J.J."/>
            <person name="Lam P."/>
            <person name="McDonald L.A."/>
            <person name="Utterback T.R."/>
            <person name="Zalewski C."/>
            <person name="Makarova K.S."/>
            <person name="Aravind L."/>
            <person name="Daly M.J."/>
            <person name="Minton K.W."/>
            <person name="Fleischmann R.D."/>
            <person name="Ketchum K.A."/>
            <person name="Nelson K.E."/>
            <person name="Salzberg S.L."/>
            <person name="Smith H.O."/>
            <person name="Venter J.C."/>
            <person name="Fraser C.M."/>
        </authorList>
    </citation>
    <scope>NUCLEOTIDE SEQUENCE [LARGE SCALE GENOMIC DNA]</scope>
    <source>
        <strain>ATCC 13939 / DSM 20539 / JCM 16871 / CCUG 27074 / LMG 4051 / NBRC 15346 / NCIMB 9279 / VKM B-1422 / R1</strain>
    </source>
</reference>
<gene>
    <name evidence="1" type="primary">rpoA</name>
    <name type="ordered locus">DR_2128</name>
</gene>
<evidence type="ECO:0000255" key="1">
    <source>
        <dbReference type="HAMAP-Rule" id="MF_00059"/>
    </source>
</evidence>
<accession>Q9RSJ6</accession>
<protein>
    <recommendedName>
        <fullName evidence="1">DNA-directed RNA polymerase subunit alpha</fullName>
        <shortName evidence="1">RNAP subunit alpha</shortName>
        <ecNumber evidence="1">2.7.7.6</ecNumber>
    </recommendedName>
    <alternativeName>
        <fullName evidence="1">RNA polymerase subunit alpha</fullName>
    </alternativeName>
    <alternativeName>
        <fullName evidence="1">Transcriptase subunit alpha</fullName>
    </alternativeName>
</protein>
<proteinExistence type="inferred from homology"/>
<feature type="chain" id="PRO_0000175301" description="DNA-directed RNA polymerase subunit alpha">
    <location>
        <begin position="1"/>
        <end position="341"/>
    </location>
</feature>
<feature type="region of interest" description="Alpha N-terminal domain (alpha-NTD)" evidence="1">
    <location>
        <begin position="1"/>
        <end position="223"/>
    </location>
</feature>
<feature type="region of interest" description="Alpha C-terminal domain (alpha-CTD)" evidence="1">
    <location>
        <begin position="268"/>
        <end position="341"/>
    </location>
</feature>
<name>RPOA_DEIRA</name>
<dbReference type="EC" id="2.7.7.6" evidence="1"/>
<dbReference type="EMBL" id="AE000513">
    <property type="protein sequence ID" value="AAF11678.1"/>
    <property type="molecule type" value="Genomic_DNA"/>
</dbReference>
<dbReference type="PIR" id="A75313">
    <property type="entry name" value="A75313"/>
</dbReference>
<dbReference type="RefSeq" id="NP_295851.1">
    <property type="nucleotide sequence ID" value="NC_001263.1"/>
</dbReference>
<dbReference type="RefSeq" id="WP_010888759.1">
    <property type="nucleotide sequence ID" value="NC_001263.1"/>
</dbReference>
<dbReference type="SMR" id="Q9RSJ6"/>
<dbReference type="FunCoup" id="Q9RSJ6">
    <property type="interactions" value="366"/>
</dbReference>
<dbReference type="STRING" id="243230.DR_2128"/>
<dbReference type="PaxDb" id="243230-DR_2128"/>
<dbReference type="EnsemblBacteria" id="AAF11678">
    <property type="protein sequence ID" value="AAF11678"/>
    <property type="gene ID" value="DR_2128"/>
</dbReference>
<dbReference type="GeneID" id="69518370"/>
<dbReference type="KEGG" id="dra:DR_2128"/>
<dbReference type="PATRIC" id="fig|243230.17.peg.2351"/>
<dbReference type="eggNOG" id="COG0202">
    <property type="taxonomic scope" value="Bacteria"/>
</dbReference>
<dbReference type="HOGENOM" id="CLU_053084_0_1_0"/>
<dbReference type="InParanoid" id="Q9RSJ6"/>
<dbReference type="OrthoDB" id="9805706at2"/>
<dbReference type="Proteomes" id="UP000002524">
    <property type="component" value="Chromosome 1"/>
</dbReference>
<dbReference type="GO" id="GO:0005737">
    <property type="term" value="C:cytoplasm"/>
    <property type="evidence" value="ECO:0000318"/>
    <property type="project" value="GO_Central"/>
</dbReference>
<dbReference type="GO" id="GO:0000428">
    <property type="term" value="C:DNA-directed RNA polymerase complex"/>
    <property type="evidence" value="ECO:0007669"/>
    <property type="project" value="UniProtKB-KW"/>
</dbReference>
<dbReference type="GO" id="GO:0003677">
    <property type="term" value="F:DNA binding"/>
    <property type="evidence" value="ECO:0007669"/>
    <property type="project" value="UniProtKB-UniRule"/>
</dbReference>
<dbReference type="GO" id="GO:0003899">
    <property type="term" value="F:DNA-directed RNA polymerase activity"/>
    <property type="evidence" value="ECO:0007669"/>
    <property type="project" value="UniProtKB-UniRule"/>
</dbReference>
<dbReference type="GO" id="GO:0046983">
    <property type="term" value="F:protein dimerization activity"/>
    <property type="evidence" value="ECO:0007669"/>
    <property type="project" value="InterPro"/>
</dbReference>
<dbReference type="GO" id="GO:0006351">
    <property type="term" value="P:DNA-templated transcription"/>
    <property type="evidence" value="ECO:0007669"/>
    <property type="project" value="UniProtKB-UniRule"/>
</dbReference>
<dbReference type="CDD" id="cd06928">
    <property type="entry name" value="RNAP_alpha_NTD"/>
    <property type="match status" value="1"/>
</dbReference>
<dbReference type="FunFam" id="2.170.120.12:FF:000001">
    <property type="entry name" value="DNA-directed RNA polymerase subunit alpha"/>
    <property type="match status" value="1"/>
</dbReference>
<dbReference type="Gene3D" id="1.10.150.20">
    <property type="entry name" value="5' to 3' exonuclease, C-terminal subdomain"/>
    <property type="match status" value="1"/>
</dbReference>
<dbReference type="Gene3D" id="2.170.120.12">
    <property type="entry name" value="DNA-directed RNA polymerase, insert domain"/>
    <property type="match status" value="1"/>
</dbReference>
<dbReference type="Gene3D" id="3.30.1360.10">
    <property type="entry name" value="RNA polymerase, RBP11-like subunit"/>
    <property type="match status" value="1"/>
</dbReference>
<dbReference type="HAMAP" id="MF_00059">
    <property type="entry name" value="RNApol_bact_RpoA"/>
    <property type="match status" value="1"/>
</dbReference>
<dbReference type="InterPro" id="IPR011262">
    <property type="entry name" value="DNA-dir_RNA_pol_insert"/>
</dbReference>
<dbReference type="InterPro" id="IPR011263">
    <property type="entry name" value="DNA-dir_RNA_pol_RpoA/D/Rpb3"/>
</dbReference>
<dbReference type="InterPro" id="IPR011773">
    <property type="entry name" value="DNA-dir_RpoA"/>
</dbReference>
<dbReference type="InterPro" id="IPR036603">
    <property type="entry name" value="RBP11-like"/>
</dbReference>
<dbReference type="InterPro" id="IPR011260">
    <property type="entry name" value="RNAP_asu_C"/>
</dbReference>
<dbReference type="InterPro" id="IPR036643">
    <property type="entry name" value="RNApol_insert_sf"/>
</dbReference>
<dbReference type="NCBIfam" id="NF003519">
    <property type="entry name" value="PRK05182.2-5"/>
    <property type="match status" value="1"/>
</dbReference>
<dbReference type="NCBIfam" id="TIGR02027">
    <property type="entry name" value="rpoA"/>
    <property type="match status" value="1"/>
</dbReference>
<dbReference type="Pfam" id="PF01000">
    <property type="entry name" value="RNA_pol_A_bac"/>
    <property type="match status" value="1"/>
</dbReference>
<dbReference type="Pfam" id="PF03118">
    <property type="entry name" value="RNA_pol_A_CTD"/>
    <property type="match status" value="1"/>
</dbReference>
<dbReference type="Pfam" id="PF01193">
    <property type="entry name" value="RNA_pol_L"/>
    <property type="match status" value="1"/>
</dbReference>
<dbReference type="SMART" id="SM00662">
    <property type="entry name" value="RPOLD"/>
    <property type="match status" value="1"/>
</dbReference>
<dbReference type="SUPFAM" id="SSF47789">
    <property type="entry name" value="C-terminal domain of RNA polymerase alpha subunit"/>
    <property type="match status" value="1"/>
</dbReference>
<dbReference type="SUPFAM" id="SSF56553">
    <property type="entry name" value="Insert subdomain of RNA polymerase alpha subunit"/>
    <property type="match status" value="1"/>
</dbReference>
<dbReference type="SUPFAM" id="SSF55257">
    <property type="entry name" value="RBP11-like subunits of RNA polymerase"/>
    <property type="match status" value="1"/>
</dbReference>
<comment type="function">
    <text evidence="1">DNA-dependent RNA polymerase catalyzes the transcription of DNA into RNA using the four ribonucleoside triphosphates as substrates.</text>
</comment>
<comment type="catalytic activity">
    <reaction evidence="1">
        <text>RNA(n) + a ribonucleoside 5'-triphosphate = RNA(n+1) + diphosphate</text>
        <dbReference type="Rhea" id="RHEA:21248"/>
        <dbReference type="Rhea" id="RHEA-COMP:14527"/>
        <dbReference type="Rhea" id="RHEA-COMP:17342"/>
        <dbReference type="ChEBI" id="CHEBI:33019"/>
        <dbReference type="ChEBI" id="CHEBI:61557"/>
        <dbReference type="ChEBI" id="CHEBI:140395"/>
        <dbReference type="EC" id="2.7.7.6"/>
    </reaction>
</comment>
<comment type="subunit">
    <text evidence="1">Homodimer. The RNAP catalytic core consists of 2 alpha, 1 beta, 1 beta' and 1 omega subunit. When a sigma factor is associated with the core the holoenzyme is formed, which can initiate transcription.</text>
</comment>
<comment type="domain">
    <text evidence="1">The N-terminal domain is essential for RNAP assembly and basal transcription, whereas the C-terminal domain is involved in interaction with transcriptional regulators and with upstream promoter elements.</text>
</comment>
<comment type="similarity">
    <text evidence="1">Belongs to the RNA polymerase alpha chain family.</text>
</comment>
<organism>
    <name type="scientific">Deinococcus radiodurans (strain ATCC 13939 / DSM 20539 / JCM 16871 / CCUG 27074 / LMG 4051 / NBRC 15346 / NCIMB 9279 / VKM B-1422 / R1)</name>
    <dbReference type="NCBI Taxonomy" id="243230"/>
    <lineage>
        <taxon>Bacteria</taxon>
        <taxon>Thermotogati</taxon>
        <taxon>Deinococcota</taxon>
        <taxon>Deinococci</taxon>
        <taxon>Deinococcales</taxon>
        <taxon>Deinococcaceae</taxon>
        <taxon>Deinococcus</taxon>
    </lineage>
</organism>
<keyword id="KW-0240">DNA-directed RNA polymerase</keyword>
<keyword id="KW-0548">Nucleotidyltransferase</keyword>
<keyword id="KW-1185">Reference proteome</keyword>
<keyword id="KW-0804">Transcription</keyword>
<keyword id="KW-0808">Transferase</keyword>
<sequence length="341" mass="37196">MEQKRPQLKARVDGDYGEFVLEPLARGYGVTIGNPIRRILMSSIPGTAVTSVYIEDVLHEFSTIPGVREDVIRLILNLKELVVKFHAPGPKTLTLRAQGEGEVRASAFEVPTDAEIVNPDLVIANLAEDGKLVMEVRVEEGEGYVSADKHATKDRINSIPVDAMFSPVRRVAYHVENTRVGQQTDLDRLILRVWTDGSAGPQEALDKAVEILRDELSVFGNVEPMPALESSYAAATPAAVYDPATATLPASVYDSPRQPDLGSLSINPQPFPTDQDTPRVTLEGLGLTTRVLHSLKEEGIDSVDALCALSDRDLKKVPGIGERSLDEIKQQLAQFGLALRD</sequence>